<sequence length="689" mass="75052">MSKHTVLFELGCEELPPKSLKTLRDALQAETVKGLNEAGLNFASVEAYAAPRRLALKIVDVDAAQADTQKRFDGPAVQAAYDAEGKPTKALEGFMRGQGITVEQLSTFQAGKVEKVCYLKDVKGQSLDTLLPQILQTALDNLPIAKRMRSAASRTEFVRPVKWVVLLKDDQVIEATIQDHKAGNVTYGHRFHAPEAVTLAHANDYLAALEKAYVVANFEKRQATIQEQVKKLADEVNATAIVPADLLDEVTSLVEWPVALRATFEERYLAVPQEALITTMQDNQKYFCLINAEGKLQPYFITVSNIESKDPTQIIEGNEKVVRPRLSDAEFFFLQDQKQPLASRKEKLANMVFQAQLGTLWDKSTRIAKLAVALSSITGANPADAEKAALLAKCDLTSELVGEFPELQGIAGTYYARIEGENTEVSEALGEQYLPKFAGDVLPKTKTGTTIALSDRLDTLVGIFGIGQAPTGSKDPFALRRSAIGILRLIIENELDVTIEELVNLALQGYGDIVKDHDKTRADAVAFLEGRYRAKYEDQGVAVDVLQAVQALAPKSPLDFDKRVNAVNHFRTLPEAAALAAANKRVANILAKEATPEGSVVEANLVEDAEKALFAELQAVTPVVEPLLAAKDYTAALSKLAALRAPIDAFFDGVMVMADDAGLKANRLRLLAQLRNLFTAVADVSVLQG</sequence>
<comment type="catalytic activity">
    <reaction evidence="1">
        <text>tRNA(Gly) + glycine + ATP = glycyl-tRNA(Gly) + AMP + diphosphate</text>
        <dbReference type="Rhea" id="RHEA:16013"/>
        <dbReference type="Rhea" id="RHEA-COMP:9664"/>
        <dbReference type="Rhea" id="RHEA-COMP:9683"/>
        <dbReference type="ChEBI" id="CHEBI:30616"/>
        <dbReference type="ChEBI" id="CHEBI:33019"/>
        <dbReference type="ChEBI" id="CHEBI:57305"/>
        <dbReference type="ChEBI" id="CHEBI:78442"/>
        <dbReference type="ChEBI" id="CHEBI:78522"/>
        <dbReference type="ChEBI" id="CHEBI:456215"/>
        <dbReference type="EC" id="6.1.1.14"/>
    </reaction>
</comment>
<comment type="subunit">
    <text evidence="1">Tetramer of two alpha and two beta subunits.</text>
</comment>
<comment type="subcellular location">
    <subcellularLocation>
        <location evidence="1">Cytoplasm</location>
    </subcellularLocation>
</comment>
<comment type="similarity">
    <text evidence="1">Belongs to the class-II aminoacyl-tRNA synthetase family.</text>
</comment>
<organism>
    <name type="scientific">Acinetobacter baumannii (strain AYE)</name>
    <dbReference type="NCBI Taxonomy" id="509173"/>
    <lineage>
        <taxon>Bacteria</taxon>
        <taxon>Pseudomonadati</taxon>
        <taxon>Pseudomonadota</taxon>
        <taxon>Gammaproteobacteria</taxon>
        <taxon>Moraxellales</taxon>
        <taxon>Moraxellaceae</taxon>
        <taxon>Acinetobacter</taxon>
        <taxon>Acinetobacter calcoaceticus/baumannii complex</taxon>
    </lineage>
</organism>
<proteinExistence type="inferred from homology"/>
<reference key="1">
    <citation type="journal article" date="2008" name="PLoS ONE">
        <title>Comparative analysis of Acinetobacters: three genomes for three lifestyles.</title>
        <authorList>
            <person name="Vallenet D."/>
            <person name="Nordmann P."/>
            <person name="Barbe V."/>
            <person name="Poirel L."/>
            <person name="Mangenot S."/>
            <person name="Bataille E."/>
            <person name="Dossat C."/>
            <person name="Gas S."/>
            <person name="Kreimeyer A."/>
            <person name="Lenoble P."/>
            <person name="Oztas S."/>
            <person name="Poulain J."/>
            <person name="Segurens B."/>
            <person name="Robert C."/>
            <person name="Abergel C."/>
            <person name="Claverie J.-M."/>
            <person name="Raoult D."/>
            <person name="Medigue C."/>
            <person name="Weissenbach J."/>
            <person name="Cruveiller S."/>
        </authorList>
    </citation>
    <scope>NUCLEOTIDE SEQUENCE [LARGE SCALE GENOMIC DNA]</scope>
    <source>
        <strain>AYE</strain>
    </source>
</reference>
<accession>B0V7W2</accession>
<evidence type="ECO:0000255" key="1">
    <source>
        <dbReference type="HAMAP-Rule" id="MF_00255"/>
    </source>
</evidence>
<keyword id="KW-0030">Aminoacyl-tRNA synthetase</keyword>
<keyword id="KW-0067">ATP-binding</keyword>
<keyword id="KW-0963">Cytoplasm</keyword>
<keyword id="KW-0436">Ligase</keyword>
<keyword id="KW-0547">Nucleotide-binding</keyword>
<keyword id="KW-0648">Protein biosynthesis</keyword>
<gene>
    <name evidence="1" type="primary">glyS</name>
    <name type="ordered locus">ABAYE0367</name>
</gene>
<feature type="chain" id="PRO_1000101256" description="Glycine--tRNA ligase beta subunit">
    <location>
        <begin position="1"/>
        <end position="689"/>
    </location>
</feature>
<name>SYGB_ACIBY</name>
<protein>
    <recommendedName>
        <fullName evidence="1">Glycine--tRNA ligase beta subunit</fullName>
        <ecNumber evidence="1">6.1.1.14</ecNumber>
    </recommendedName>
    <alternativeName>
        <fullName evidence="1">Glycyl-tRNA synthetase beta subunit</fullName>
        <shortName evidence="1">GlyRS</shortName>
    </alternativeName>
</protein>
<dbReference type="EC" id="6.1.1.14" evidence="1"/>
<dbReference type="EMBL" id="CU459141">
    <property type="protein sequence ID" value="CAM85343.1"/>
    <property type="molecule type" value="Genomic_DNA"/>
</dbReference>
<dbReference type="RefSeq" id="WP_000033906.1">
    <property type="nucleotide sequence ID" value="NZ_JBDGFB010000011.1"/>
</dbReference>
<dbReference type="SMR" id="B0V7W2"/>
<dbReference type="EnsemblBacteria" id="CAM85343">
    <property type="protein sequence ID" value="CAM85343"/>
    <property type="gene ID" value="ABAYE0367"/>
</dbReference>
<dbReference type="KEGG" id="aby:ABAYE0367"/>
<dbReference type="HOGENOM" id="CLU_007220_2_2_6"/>
<dbReference type="GO" id="GO:0005829">
    <property type="term" value="C:cytosol"/>
    <property type="evidence" value="ECO:0007669"/>
    <property type="project" value="TreeGrafter"/>
</dbReference>
<dbReference type="GO" id="GO:0004814">
    <property type="term" value="F:arginine-tRNA ligase activity"/>
    <property type="evidence" value="ECO:0007669"/>
    <property type="project" value="InterPro"/>
</dbReference>
<dbReference type="GO" id="GO:0005524">
    <property type="term" value="F:ATP binding"/>
    <property type="evidence" value="ECO:0007669"/>
    <property type="project" value="UniProtKB-UniRule"/>
</dbReference>
<dbReference type="GO" id="GO:0004820">
    <property type="term" value="F:glycine-tRNA ligase activity"/>
    <property type="evidence" value="ECO:0007669"/>
    <property type="project" value="UniProtKB-UniRule"/>
</dbReference>
<dbReference type="GO" id="GO:0006420">
    <property type="term" value="P:arginyl-tRNA aminoacylation"/>
    <property type="evidence" value="ECO:0007669"/>
    <property type="project" value="InterPro"/>
</dbReference>
<dbReference type="GO" id="GO:0006426">
    <property type="term" value="P:glycyl-tRNA aminoacylation"/>
    <property type="evidence" value="ECO:0007669"/>
    <property type="project" value="UniProtKB-UniRule"/>
</dbReference>
<dbReference type="HAMAP" id="MF_00255">
    <property type="entry name" value="Gly_tRNA_synth_beta"/>
    <property type="match status" value="1"/>
</dbReference>
<dbReference type="InterPro" id="IPR008909">
    <property type="entry name" value="DALR_anticod-bd"/>
</dbReference>
<dbReference type="InterPro" id="IPR015944">
    <property type="entry name" value="Gly-tRNA-synth_bsu"/>
</dbReference>
<dbReference type="InterPro" id="IPR006194">
    <property type="entry name" value="Gly-tRNA-synth_heterodimer"/>
</dbReference>
<dbReference type="NCBIfam" id="TIGR00211">
    <property type="entry name" value="glyS"/>
    <property type="match status" value="1"/>
</dbReference>
<dbReference type="PANTHER" id="PTHR30075:SF2">
    <property type="entry name" value="GLYCINE--TRNA LIGASE, CHLOROPLASTIC_MITOCHONDRIAL 2"/>
    <property type="match status" value="1"/>
</dbReference>
<dbReference type="PANTHER" id="PTHR30075">
    <property type="entry name" value="GLYCYL-TRNA SYNTHETASE"/>
    <property type="match status" value="1"/>
</dbReference>
<dbReference type="Pfam" id="PF05746">
    <property type="entry name" value="DALR_1"/>
    <property type="match status" value="1"/>
</dbReference>
<dbReference type="Pfam" id="PF02092">
    <property type="entry name" value="tRNA_synt_2f"/>
    <property type="match status" value="1"/>
</dbReference>
<dbReference type="PRINTS" id="PR01045">
    <property type="entry name" value="TRNASYNTHGB"/>
</dbReference>
<dbReference type="SUPFAM" id="SSF109604">
    <property type="entry name" value="HD-domain/PDEase-like"/>
    <property type="match status" value="1"/>
</dbReference>
<dbReference type="PROSITE" id="PS50861">
    <property type="entry name" value="AA_TRNA_LIGASE_II_GLYAB"/>
    <property type="match status" value="1"/>
</dbReference>